<proteinExistence type="evidence at protein level"/>
<reference key="1">
    <citation type="journal article" date="2006" name="Toxicon">
        <title>Molecular cloning of the major lethal toxins from two kraits (Bungarus flaviceps and Bungarus candidus).</title>
        <authorList>
            <person name="Yanoshita R."/>
            <person name="Ogawa Y."/>
            <person name="Murayama N."/>
            <person name="Omori-Satoh T."/>
            <person name="Saguchi K."/>
            <person name="Higuchi S."/>
            <person name="Khow O."/>
            <person name="Chanhome L."/>
            <person name="Samejima Y."/>
            <person name="Sitprija V."/>
        </authorList>
    </citation>
    <scope>NUCLEOTIDE SEQUENCE [MRNA]</scope>
    <scope>PROTEIN SEQUENCE OF 28-50; 59-70; 93-97 AND 101-143</scope>
    <scope>IDENTIFICATION BY MASS SPECTROMETRY</scope>
    <scope>SUBUNIT</scope>
    <scope>SUBCELLULAR LOCATION</scope>
    <source>
        <tissue>Venom</tissue>
        <tissue>Venom gland</tissue>
    </source>
</reference>
<reference key="2">
    <citation type="journal article" date="2002" name="Toxicon">
        <title>Isolation of the major lethal toxin in the venom of Bungarus flaviceps.</title>
        <authorList>
            <person name="Khow O."/>
            <person name="Chanhome L."/>
            <person name="Omori-Satoh T."/>
            <person name="Sitprija V."/>
        </authorList>
    </citation>
    <scope>FUNCTION</scope>
    <scope>SUBUNIT</scope>
    <scope>SUBCELLULAR LOCATION</scope>
    <source>
        <tissue>Venom</tissue>
    </source>
</reference>
<feature type="signal peptide" evidence="3">
    <location>
        <begin position="1"/>
        <end position="19"/>
    </location>
</feature>
<feature type="propeptide" id="PRO_0000271455" evidence="10">
    <location>
        <begin position="20"/>
        <end position="27"/>
    </location>
</feature>
<feature type="chain" id="PRO_5000050833" description="Basic phospholipase A2 beta-bungarotoxin A1 chain" evidence="10">
    <location>
        <begin position="28"/>
        <end position="146"/>
    </location>
</feature>
<feature type="active site" evidence="2">
    <location>
        <position position="75"/>
    </location>
</feature>
<feature type="active site" evidence="2">
    <location>
        <position position="120"/>
    </location>
</feature>
<feature type="binding site" evidence="1">
    <location>
        <position position="55"/>
    </location>
    <ligand>
        <name>Ca(2+)</name>
        <dbReference type="ChEBI" id="CHEBI:29108"/>
    </ligand>
</feature>
<feature type="binding site" evidence="1">
    <location>
        <position position="57"/>
    </location>
    <ligand>
        <name>Ca(2+)</name>
        <dbReference type="ChEBI" id="CHEBI:29108"/>
    </ligand>
</feature>
<feature type="binding site" evidence="1">
    <location>
        <position position="59"/>
    </location>
    <ligand>
        <name>Ca(2+)</name>
        <dbReference type="ChEBI" id="CHEBI:29108"/>
    </ligand>
</feature>
<feature type="binding site" evidence="1">
    <location>
        <position position="76"/>
    </location>
    <ligand>
        <name>Ca(2+)</name>
        <dbReference type="ChEBI" id="CHEBI:29108"/>
    </ligand>
</feature>
<feature type="disulfide bond" description="Interchain (with a B chain)" evidence="1">
    <location>
        <position position="42"/>
    </location>
</feature>
<feature type="disulfide bond" evidence="1">
    <location>
        <begin position="54"/>
        <end position="145"/>
    </location>
</feature>
<feature type="disulfide bond" evidence="1">
    <location>
        <begin position="56"/>
        <end position="72"/>
    </location>
</feature>
<feature type="disulfide bond" evidence="1">
    <location>
        <begin position="71"/>
        <end position="126"/>
    </location>
</feature>
<feature type="disulfide bond" evidence="1">
    <location>
        <begin position="78"/>
        <end position="119"/>
    </location>
</feature>
<feature type="disulfide bond" evidence="1">
    <location>
        <begin position="87"/>
        <end position="112"/>
    </location>
</feature>
<feature type="disulfide bond" evidence="1">
    <location>
        <begin position="105"/>
        <end position="117"/>
    </location>
</feature>
<dbReference type="EC" id="3.1.1.4"/>
<dbReference type="EMBL" id="AB112357">
    <property type="protein sequence ID" value="BAC77653.1"/>
    <property type="molecule type" value="mRNA"/>
</dbReference>
<dbReference type="SMR" id="Q7T1R0"/>
<dbReference type="GO" id="GO:0005576">
    <property type="term" value="C:extracellular region"/>
    <property type="evidence" value="ECO:0007669"/>
    <property type="project" value="UniProtKB-SubCell"/>
</dbReference>
<dbReference type="GO" id="GO:0005509">
    <property type="term" value="F:calcium ion binding"/>
    <property type="evidence" value="ECO:0007669"/>
    <property type="project" value="InterPro"/>
</dbReference>
<dbReference type="GO" id="GO:0047498">
    <property type="term" value="F:calcium-dependent phospholipase A2 activity"/>
    <property type="evidence" value="ECO:0007669"/>
    <property type="project" value="TreeGrafter"/>
</dbReference>
<dbReference type="GO" id="GO:0005543">
    <property type="term" value="F:phospholipid binding"/>
    <property type="evidence" value="ECO:0007669"/>
    <property type="project" value="TreeGrafter"/>
</dbReference>
<dbReference type="GO" id="GO:0090729">
    <property type="term" value="F:toxin activity"/>
    <property type="evidence" value="ECO:0007669"/>
    <property type="project" value="UniProtKB-KW"/>
</dbReference>
<dbReference type="GO" id="GO:0050482">
    <property type="term" value="P:arachidonate secretion"/>
    <property type="evidence" value="ECO:0007669"/>
    <property type="project" value="InterPro"/>
</dbReference>
<dbReference type="GO" id="GO:0016042">
    <property type="term" value="P:lipid catabolic process"/>
    <property type="evidence" value="ECO:0007669"/>
    <property type="project" value="UniProtKB-KW"/>
</dbReference>
<dbReference type="GO" id="GO:0006644">
    <property type="term" value="P:phospholipid metabolic process"/>
    <property type="evidence" value="ECO:0007669"/>
    <property type="project" value="InterPro"/>
</dbReference>
<dbReference type="CDD" id="cd00125">
    <property type="entry name" value="PLA2c"/>
    <property type="match status" value="1"/>
</dbReference>
<dbReference type="FunFam" id="1.20.90.10:FF:000007">
    <property type="entry name" value="Acidic phospholipase A2"/>
    <property type="match status" value="1"/>
</dbReference>
<dbReference type="Gene3D" id="1.20.90.10">
    <property type="entry name" value="Phospholipase A2 domain"/>
    <property type="match status" value="1"/>
</dbReference>
<dbReference type="InterPro" id="IPR001211">
    <property type="entry name" value="PLipase_A2"/>
</dbReference>
<dbReference type="InterPro" id="IPR033112">
    <property type="entry name" value="PLipase_A2_Asp_AS"/>
</dbReference>
<dbReference type="InterPro" id="IPR016090">
    <property type="entry name" value="PLipase_A2_dom"/>
</dbReference>
<dbReference type="InterPro" id="IPR036444">
    <property type="entry name" value="PLipase_A2_dom_sf"/>
</dbReference>
<dbReference type="InterPro" id="IPR033113">
    <property type="entry name" value="PLipase_A2_His_AS"/>
</dbReference>
<dbReference type="PANTHER" id="PTHR11716:SF100">
    <property type="entry name" value="PHOSPHOLIPASE A2"/>
    <property type="match status" value="1"/>
</dbReference>
<dbReference type="PANTHER" id="PTHR11716">
    <property type="entry name" value="PHOSPHOLIPASE A2 FAMILY MEMBER"/>
    <property type="match status" value="1"/>
</dbReference>
<dbReference type="Pfam" id="PF00068">
    <property type="entry name" value="Phospholip_A2_1"/>
    <property type="match status" value="1"/>
</dbReference>
<dbReference type="PRINTS" id="PR00389">
    <property type="entry name" value="PHPHLIPASEA2"/>
</dbReference>
<dbReference type="SMART" id="SM00085">
    <property type="entry name" value="PA2c"/>
    <property type="match status" value="1"/>
</dbReference>
<dbReference type="SUPFAM" id="SSF48619">
    <property type="entry name" value="Phospholipase A2, PLA2"/>
    <property type="match status" value="1"/>
</dbReference>
<dbReference type="PROSITE" id="PS00119">
    <property type="entry name" value="PA2_ASP"/>
    <property type="match status" value="1"/>
</dbReference>
<dbReference type="PROSITE" id="PS00118">
    <property type="entry name" value="PA2_HIS"/>
    <property type="match status" value="1"/>
</dbReference>
<organism>
    <name type="scientific">Bungarus flaviceps flaviceps</name>
    <name type="common">Red-headed krait</name>
    <dbReference type="NCBI Taxonomy" id="8615"/>
    <lineage>
        <taxon>Eukaryota</taxon>
        <taxon>Metazoa</taxon>
        <taxon>Chordata</taxon>
        <taxon>Craniata</taxon>
        <taxon>Vertebrata</taxon>
        <taxon>Euteleostomi</taxon>
        <taxon>Lepidosauria</taxon>
        <taxon>Squamata</taxon>
        <taxon>Bifurcata</taxon>
        <taxon>Unidentata</taxon>
        <taxon>Episquamata</taxon>
        <taxon>Toxicofera</taxon>
        <taxon>Serpentes</taxon>
        <taxon>Colubroidea</taxon>
        <taxon>Elapidae</taxon>
        <taxon>Bungarinae</taxon>
        <taxon>Bungarus</taxon>
    </lineage>
</organism>
<keyword id="KW-0106">Calcium</keyword>
<keyword id="KW-0903">Direct protein sequencing</keyword>
<keyword id="KW-1015">Disulfide bond</keyword>
<keyword id="KW-0378">Hydrolase</keyword>
<keyword id="KW-0442">Lipid degradation</keyword>
<keyword id="KW-0443">Lipid metabolism</keyword>
<keyword id="KW-0479">Metal-binding</keyword>
<keyword id="KW-0528">Neurotoxin</keyword>
<keyword id="KW-0638">Presynaptic neurotoxin</keyword>
<keyword id="KW-0964">Secreted</keyword>
<keyword id="KW-0732">Signal</keyword>
<keyword id="KW-0800">Toxin</keyword>
<accession>Q7T1R0</accession>
<name>PA2B1_BUNFL</name>
<evidence type="ECO:0000250" key="1">
    <source>
        <dbReference type="UniProtKB" id="P00617"/>
    </source>
</evidence>
<evidence type="ECO:0000250" key="2">
    <source>
        <dbReference type="UniProtKB" id="P14418"/>
    </source>
</evidence>
<evidence type="ECO:0000255" key="3"/>
<evidence type="ECO:0000255" key="4">
    <source>
        <dbReference type="PROSITE-ProRule" id="PRU10035"/>
    </source>
</evidence>
<evidence type="ECO:0000255" key="5">
    <source>
        <dbReference type="PROSITE-ProRule" id="PRU10036"/>
    </source>
</evidence>
<evidence type="ECO:0000269" key="6">
    <source>
    </source>
</evidence>
<evidence type="ECO:0000269" key="7">
    <source>
    </source>
</evidence>
<evidence type="ECO:0000305" key="8"/>
<evidence type="ECO:0000305" key="9">
    <source>
    </source>
</evidence>
<evidence type="ECO:0000305" key="10">
    <source>
    </source>
</evidence>
<sequence>MNPAHLLVLPAVCVSFLGASIIPPQSLNLIQFKDMIRCTIPCERTWGEYADYGCYCGKGGSGRPVDALDRCCYVHDNCYGEAQKRNCNPYMKSYSFKCAKRTLFCYDAPGSCARFVCDCDRTAALCFGDSEYIGRHKNIDTKRHCQ</sequence>
<protein>
    <recommendedName>
        <fullName>Basic phospholipase A2 beta-bungarotoxin A1 chain</fullName>
        <shortName>Beta-BuTX A1 chain</shortName>
        <shortName>svPLA2</shortName>
        <ecNumber>3.1.1.4</ecNumber>
    </recommendedName>
    <alternativeName>
        <fullName>Phosphatidylcholine 2-acylhydrolase</fullName>
    </alternativeName>
</protein>
<comment type="function">
    <text evidence="6">Snake venom phospholipase A2 (PLA2) that inhibits neuromuscular transmission by blocking acetylcholine release from the nerve termini. PLA2 catalyzes the calcium-dependent hydrolysis of the 2-acyl groups in 3-sn-phosphoglycerides.</text>
</comment>
<comment type="catalytic activity">
    <reaction evidence="4 5">
        <text>a 1,2-diacyl-sn-glycero-3-phosphocholine + H2O = a 1-acyl-sn-glycero-3-phosphocholine + a fatty acid + H(+)</text>
        <dbReference type="Rhea" id="RHEA:15801"/>
        <dbReference type="ChEBI" id="CHEBI:15377"/>
        <dbReference type="ChEBI" id="CHEBI:15378"/>
        <dbReference type="ChEBI" id="CHEBI:28868"/>
        <dbReference type="ChEBI" id="CHEBI:57643"/>
        <dbReference type="ChEBI" id="CHEBI:58168"/>
        <dbReference type="EC" id="3.1.1.4"/>
    </reaction>
</comment>
<comment type="cofactor">
    <cofactor evidence="1">
        <name>Ca(2+)</name>
        <dbReference type="ChEBI" id="CHEBI:29108"/>
    </cofactor>
    <text evidence="1">Binds 1 Ca(2+) ion.</text>
</comment>
<comment type="subunit">
    <text evidence="6 7">Heterodimer with beta-bungarotoxin B chain; disulfide-linked. The A chain has phospholipase A2 activity and the B chain shows homology with the basic protease inhibitors.</text>
</comment>
<comment type="subcellular location">
    <subcellularLocation>
        <location evidence="6 7">Secreted</location>
    </subcellularLocation>
</comment>
<comment type="tissue specificity">
    <text evidence="9 10">Expressed by the venom gland.</text>
</comment>
<comment type="similarity">
    <text evidence="8">Belongs to the phospholipase A2 family. Group I subfamily. D49 sub-subfamily.</text>
</comment>